<gene>
    <name evidence="10" type="primary">gloI</name>
    <name evidence="11" type="synonym">GLHtyC</name>
    <name type="ORF">GLAREA_10038</name>
</gene>
<evidence type="ECO:0000250" key="1">
    <source>
        <dbReference type="UniProtKB" id="P08200"/>
    </source>
</evidence>
<evidence type="ECO:0000250" key="2">
    <source>
        <dbReference type="UniProtKB" id="P87256"/>
    </source>
</evidence>
<evidence type="ECO:0000250" key="3">
    <source>
        <dbReference type="UniProtKB" id="P93832"/>
    </source>
</evidence>
<evidence type="ECO:0000269" key="4">
    <source>
    </source>
</evidence>
<evidence type="ECO:0000269" key="5">
    <source>
    </source>
</evidence>
<evidence type="ECO:0000269" key="6">
    <source>
    </source>
</evidence>
<evidence type="ECO:0000269" key="7">
    <source>
    </source>
</evidence>
<evidence type="ECO:0000269" key="8">
    <source>
    </source>
</evidence>
<evidence type="ECO:0000303" key="9">
    <source>
    </source>
</evidence>
<evidence type="ECO:0000303" key="10">
    <source>
    </source>
</evidence>
<evidence type="ECO:0000303" key="11">
    <source>
    </source>
</evidence>
<evidence type="ECO:0000303" key="12">
    <source>
    </source>
</evidence>
<evidence type="ECO:0000305" key="13"/>
<evidence type="ECO:0000305" key="14">
    <source>
    </source>
</evidence>
<sequence>MTKQFDIVVFPGDYGGPEVMAEGIKVLKAIERKHQSDVSFNLKYHLIGGASFDIHDTPITTEALEDAKAASAVLLGAVGGPKWDGTPVPVESGLGRLRKFLDAFGNIRPVNFIAPSLVNCSSFKEHVVSGTDITIVRELTGGIYFGARQEHDGSFNSASDLDHYDRDSIVRAARLAGKLAMSRQPHLPVTSLDKANLLAACGRLWRGVVKEVFETEFPTIKLSHMLIDTAAMNVARRPTSLNGIILTSNMFGDIISDEASAIPGSLGLLPSASLCAIPTVLDASKVRGIYEPIHGSAPDIAGQGIINPTGMILSVAMMLRYSLAMPEAADSIEAAVGKVIEDDCRTSDIGGRASTADFGDAVVIALRNCLDKN</sequence>
<comment type="function">
    <text evidence="4 5 6 7 8 12">3-isopropylmalate dehydrogenase; part of the gene cluster that mediates the biosynthesis of pneumocandins, lipohexapeptides of the echinocandin family that prevent fungal cell wall formation by non-competitive inhibition of beta-1,3-glucan synthase (PubMed:27705900). The 10,12-dimethylmyristoyl side chain is synthesized by the reducing polyketide synthase gloL/GLPKS4 (PubMed:27494047). The thioesterase gloN/GLHYD exclusively interacts with gloL/GLPKS4 to maintain turnover of the polyketide side chain (PubMed:27494047). The 10R,12S-dimethylmyristic acid is then transferred to the first thiolation domain of the nonribosomal peptide synthetase gloA/GLNRPS4 by the acyl-AMP ligase gloD/GLligase, followed by its acylation to L-ornithine to trigger elongation of the cyclic hexapeptide (PubMed:27494047). L-ornithine, 4R-hydroxyl-L-proline (generated from L-proline by the dioxygenase gloF/GLOXY2), 3S-hydroxyl-L-homotyrosine (generated by gloG/GLHtyB, gloH/GLHtyA, gloI/GLHtyC, gloJ/GLHtyD and hydroxylated at C-3 by the dioxygenase gloM/GLOXY1), 3R-hydroxyl-L-glutamine (generated from L-glutamine probably by the dioxygenase gloE/GLOXY3) and 3S-hydroxyl-L-proline (generated from L-proline by the dioxygenase gloF/GLOXY2 to yield pneumocandin B0), or 3S-hydroxyl-4S-methyl-L-proline (generated from L-leucine by the dioxygenase gloC/GLOXY4 to yield pneumocandin A0) are sequentially added to the growing chain (PubMed:25270390, PubMed:25527531, PubMed:25879325). The last C domain of gloA/GLNRPS4 is proposed to be responsible for cyclization by condensation to form the peptide bond between L-ornithine and 3S-hydroxyl-4S-methyl-L-proline (for pneumocandin A0) or 3S-hydroxyl-L-proline (for pneumocandin B0). Finally, the subsequent C-4 hydroxylation of 3S-hydroxyl-L-homotyrosine and L-ornithine dihydroxylation at C-4 and C-5 are performed by the cytochrome P450 monooxygenases gloP/GLP450-1 and gloO/GLP450-2, respectively (PubMed:25879325).</text>
</comment>
<comment type="catalytic activity">
    <reaction evidence="1">
        <text>(2R,3S)-3-isopropylmalate + NAD(+) = 4-methyl-2-oxopentanoate + CO2 + NADH</text>
        <dbReference type="Rhea" id="RHEA:32271"/>
        <dbReference type="ChEBI" id="CHEBI:16526"/>
        <dbReference type="ChEBI" id="CHEBI:17865"/>
        <dbReference type="ChEBI" id="CHEBI:35121"/>
        <dbReference type="ChEBI" id="CHEBI:57540"/>
        <dbReference type="ChEBI" id="CHEBI:57945"/>
        <dbReference type="EC" id="1.1.1.85"/>
    </reaction>
</comment>
<comment type="cofactor">
    <cofactor evidence="1">
        <name>Mg(2+)</name>
        <dbReference type="ChEBI" id="CHEBI:18420"/>
    </cofactor>
    <cofactor evidence="1">
        <name>Mn(2+)</name>
        <dbReference type="ChEBI" id="CHEBI:29035"/>
    </cofactor>
    <text evidence="1">Binds 1 Mg(2+) or Mn(2+) ion per subunit.</text>
</comment>
<comment type="pathway">
    <text evidence="14">Mycotoxin biosynthesis.</text>
</comment>
<comment type="subunit">
    <text evidence="1">Homodimer.</text>
</comment>
<comment type="biotechnology">
    <text evidence="5 6 7">Pneumocandin B0 is the starting molecule for the first semisynthetic echinocandin antifungal drug, caspofungin acetate (PubMed:25527531). Pneumocandin B0 is a minor fermentation product, and its industrial production was achieved by a combination of extensive mutation and medium optimization (PubMed:25527531). Inactivation of three of gloP/GLP450-1, gloO/GLP450-2, and gloM/GLOXY1 generates 13 different pneumocandin analogs that lack one, two, three, or four hydroxyl groups on 4R,5R-dihydroxy-ornithine and 3S,4S-dihydroxy-homotyrosine of the parent hexapeptide (PubMed:25879325). All of these cyclic lipopeptides show potent antifungal activities, and two new metabolites pneumocandins F and G are more potent in vitro against Candida species and Aspergillus fumigatus than the principal fermentation products, pneumocandins A0 and B0 (PubMed:25879325). Moreover, feeding alternative side chain precursors yields acrophiarin and 4 additional pneumocandin congeners with straight C14, C15, and C16 side chains. One of those compounds, pneumocandin I, has elevated antifungal activity and similar hemolytic activity compared to pneumocandin B0, the starting molecule for caspofungin, demonstrating the potential for using gloD/GLligase for future engineering of new echinocandin analogs (PubMed:27494047).</text>
</comment>
<comment type="similarity">
    <text evidence="13">Belongs to the isocitrate and isopropylmalate dehydrogenases family.</text>
</comment>
<proteinExistence type="evidence at protein level"/>
<accession>S3DB74</accession>
<protein>
    <recommendedName>
        <fullName evidence="2">3-isopropylmalate dehydrogenase gloI</fullName>
        <ecNumber evidence="2">1.1.1.85</ecNumber>
    </recommendedName>
    <alternativeName>
        <fullName evidence="9">L-homotyrosine biosynthesis sub-cluster protein gloI</fullName>
    </alternativeName>
    <alternativeName>
        <fullName evidence="10">Pneumocandin biosynthesis cluster protein I</fullName>
    </alternativeName>
</protein>
<reference key="1">
    <citation type="journal article" date="2013" name="BMC Genomics">
        <title>Genomics-driven discovery of the pneumocandin biosynthetic gene cluster in the fungus Glarea lozoyensis.</title>
        <authorList>
            <person name="Chen L."/>
            <person name="Yue Q."/>
            <person name="Zhang X."/>
            <person name="Xiang M."/>
            <person name="Wang C."/>
            <person name="Li S."/>
            <person name="Che Y."/>
            <person name="Ortiz-Lopez F.J."/>
            <person name="Bills G.F."/>
            <person name="Liu X."/>
            <person name="An Z."/>
        </authorList>
    </citation>
    <scope>NUCLEOTIDE SEQUENCE [LARGE SCALE GENOMIC DNA]</scope>
    <scope>IDENTIFICATION</scope>
    <scope>FUNCTION</scope>
    <source>
        <strain>ATCC 20868 / MF5171</strain>
    </source>
</reference>
<reference key="2">
    <citation type="journal article" date="2014" name="ChemBioChem">
        <title>Pneumocandin biosynthesis: involvement of a trans-selective proline hydroxylase.</title>
        <authorList>
            <person name="Houwaart S."/>
            <person name="Youssar L."/>
            <person name="Huettel W."/>
        </authorList>
    </citation>
    <scope>FUNCTION</scope>
</reference>
<reference key="3">
    <citation type="journal article" date="2015" name="ACS Chem. Biol.">
        <title>Genetic manipulation of the pneumocandin biosynthetic pathway for generation of analogues and evaluation of their antifungal activity.</title>
        <authorList>
            <person name="Li Y."/>
            <person name="Chen L."/>
            <person name="Yue Q."/>
            <person name="Liu X."/>
            <person name="An Z."/>
            <person name="Bills G.F."/>
        </authorList>
    </citation>
    <scope>FUNCTION</scope>
    <scope>PATHWAY</scope>
    <scope>BIOTECHNOLOGY</scope>
</reference>
<reference key="4">
    <citation type="journal article" date="2015" name="Appl. Environ. Microbiol.">
        <title>Engineering of Glarea lozoyensis for exclusive production of the pneumocandin B0 precursor of the antifungal drug caspofungin acetate.</title>
        <authorList>
            <person name="Chen L."/>
            <person name="Yue Q."/>
            <person name="Li Y."/>
            <person name="Niu X."/>
            <person name="Xiang M."/>
            <person name="Wang W."/>
            <person name="Bills G.F."/>
            <person name="Liu X."/>
            <person name="An Z."/>
        </authorList>
    </citation>
    <scope>FUNCTION</scope>
    <scope>BIOTECHNOLOGY</scope>
</reference>
<reference key="5">
    <citation type="journal article" date="2016" name="ACS Chem. Biol.">
        <title>Engineering of new pneumocandin side-chain analogues from Glarea lozoyensis by mutasynthesis and evaluation of their antifungal activity.</title>
        <authorList>
            <person name="Chen L."/>
            <person name="Li Y."/>
            <person name="Yue Q."/>
            <person name="Loksztejn A."/>
            <person name="Yokoyama K."/>
            <person name="Felix E.A."/>
            <person name="Liu X."/>
            <person name="Zhang N."/>
            <person name="An Z."/>
            <person name="Bills G.F."/>
        </authorList>
    </citation>
    <scope>FUNCTION</scope>
    <scope>BIOTECHNOLOGY</scope>
</reference>
<reference key="6">
    <citation type="journal article" date="2018" name="Appl. Environ. Microbiol.">
        <title>Cryptic production of trans-3-hydroxyproline in echinocandin B biosynthesis.</title>
        <authorList>
            <person name="Mattay J."/>
            <person name="Houwaart S."/>
            <person name="Huettel W."/>
        </authorList>
    </citation>
    <scope>FUNCTION</scope>
</reference>
<reference key="7">
    <citation type="journal article" date="2017" name="Z. Naturforsch. C">
        <title>Structural diversity in echinocandin biosynthesis: the impact of oxidation steps and approaches toward an evolutionary explanation.</title>
        <authorList>
            <person name="Huettel W."/>
        </authorList>
    </citation>
    <scope>REVIEW</scope>
</reference>
<keyword id="KW-0028">Amino-acid biosynthesis</keyword>
<keyword id="KW-0100">Branched-chain amino acid biosynthesis</keyword>
<keyword id="KW-0432">Leucine biosynthesis</keyword>
<keyword id="KW-0460">Magnesium</keyword>
<keyword id="KW-0464">Manganese</keyword>
<keyword id="KW-0479">Metal-binding</keyword>
<keyword id="KW-0520">NAD</keyword>
<keyword id="KW-0521">NADP</keyword>
<keyword id="KW-0560">Oxidoreductase</keyword>
<keyword id="KW-1185">Reference proteome</keyword>
<name>GLOI_GLAL2</name>
<dbReference type="EC" id="1.1.1.85" evidence="2"/>
<dbReference type="EMBL" id="KE145356">
    <property type="protein sequence ID" value="EPE34344.1"/>
    <property type="molecule type" value="Genomic_DNA"/>
</dbReference>
<dbReference type="RefSeq" id="XP_008078279.1">
    <property type="nucleotide sequence ID" value="XM_008080088.1"/>
</dbReference>
<dbReference type="SMR" id="S3DB74"/>
<dbReference type="STRING" id="1116229.S3DB74"/>
<dbReference type="GeneID" id="19469085"/>
<dbReference type="KEGG" id="glz:GLAREA_10038"/>
<dbReference type="eggNOG" id="KOG0786">
    <property type="taxonomic scope" value="Eukaryota"/>
</dbReference>
<dbReference type="HOGENOM" id="CLU_031953_0_3_1"/>
<dbReference type="OMA" id="INPTGMI"/>
<dbReference type="OrthoDB" id="419183at2759"/>
<dbReference type="Proteomes" id="UP000016922">
    <property type="component" value="Unassembled WGS sequence"/>
</dbReference>
<dbReference type="GO" id="GO:0005829">
    <property type="term" value="C:cytosol"/>
    <property type="evidence" value="ECO:0007669"/>
    <property type="project" value="TreeGrafter"/>
</dbReference>
<dbReference type="GO" id="GO:0003862">
    <property type="term" value="F:3-isopropylmalate dehydrogenase activity"/>
    <property type="evidence" value="ECO:0007669"/>
    <property type="project" value="UniProtKB-EC"/>
</dbReference>
<dbReference type="GO" id="GO:0000287">
    <property type="term" value="F:magnesium ion binding"/>
    <property type="evidence" value="ECO:0007669"/>
    <property type="project" value="InterPro"/>
</dbReference>
<dbReference type="GO" id="GO:0051287">
    <property type="term" value="F:NAD binding"/>
    <property type="evidence" value="ECO:0007669"/>
    <property type="project" value="InterPro"/>
</dbReference>
<dbReference type="GO" id="GO:0009098">
    <property type="term" value="P:L-leucine biosynthetic process"/>
    <property type="evidence" value="ECO:0007669"/>
    <property type="project" value="UniProtKB-KW"/>
</dbReference>
<dbReference type="FunFam" id="3.40.718.10:FF:000006">
    <property type="entry name" value="3-isopropylmalate dehydrogenase"/>
    <property type="match status" value="1"/>
</dbReference>
<dbReference type="Gene3D" id="3.40.718.10">
    <property type="entry name" value="Isopropylmalate Dehydrogenase"/>
    <property type="match status" value="1"/>
</dbReference>
<dbReference type="InterPro" id="IPR019818">
    <property type="entry name" value="IsoCit/isopropylmalate_DH_CS"/>
</dbReference>
<dbReference type="InterPro" id="IPR024084">
    <property type="entry name" value="IsoPropMal-DH-like_dom"/>
</dbReference>
<dbReference type="InterPro" id="IPR004429">
    <property type="entry name" value="Isopropylmalate_DH"/>
</dbReference>
<dbReference type="NCBIfam" id="TIGR00169">
    <property type="entry name" value="leuB"/>
    <property type="match status" value="1"/>
</dbReference>
<dbReference type="PANTHER" id="PTHR42979">
    <property type="entry name" value="3-ISOPROPYLMALATE DEHYDROGENASE"/>
    <property type="match status" value="1"/>
</dbReference>
<dbReference type="PANTHER" id="PTHR42979:SF1">
    <property type="entry name" value="3-ISOPROPYLMALATE DEHYDROGENASE"/>
    <property type="match status" value="1"/>
</dbReference>
<dbReference type="Pfam" id="PF00180">
    <property type="entry name" value="Iso_dh"/>
    <property type="match status" value="1"/>
</dbReference>
<dbReference type="SMART" id="SM01329">
    <property type="entry name" value="Iso_dh"/>
    <property type="match status" value="1"/>
</dbReference>
<dbReference type="SUPFAM" id="SSF53659">
    <property type="entry name" value="Isocitrate/Isopropylmalate dehydrogenase-like"/>
    <property type="match status" value="1"/>
</dbReference>
<dbReference type="PROSITE" id="PS00470">
    <property type="entry name" value="IDH_IMDH"/>
    <property type="match status" value="1"/>
</dbReference>
<feature type="chain" id="PRO_0000444494" description="3-isopropylmalate dehydrogenase gloI">
    <location>
        <begin position="1"/>
        <end position="373"/>
    </location>
</feature>
<feature type="binding site" evidence="1">
    <location>
        <position position="92"/>
    </location>
    <ligand>
        <name>substrate</name>
    </ligand>
</feature>
<feature type="binding site" evidence="1">
    <location>
        <position position="98"/>
    </location>
    <ligand>
        <name>substrate</name>
    </ligand>
</feature>
<feature type="binding site" evidence="1">
    <location>
        <position position="108"/>
    </location>
    <ligand>
        <name>substrate</name>
    </ligand>
</feature>
<feature type="binding site" evidence="3">
    <location>
        <position position="228"/>
    </location>
    <ligand>
        <name>Mg(2+)</name>
        <dbReference type="ChEBI" id="CHEBI:18420"/>
    </ligand>
</feature>
<feature type="binding site" evidence="3">
    <location>
        <position position="253"/>
    </location>
    <ligand>
        <name>Mg(2+)</name>
        <dbReference type="ChEBI" id="CHEBI:18420"/>
    </ligand>
</feature>
<feature type="binding site" evidence="3">
    <location>
        <position position="257"/>
    </location>
    <ligand>
        <name>Mg(2+)</name>
        <dbReference type="ChEBI" id="CHEBI:18420"/>
    </ligand>
</feature>
<feature type="binding site" evidence="1">
    <location>
        <begin position="294"/>
        <end position="300"/>
    </location>
    <ligand>
        <name>NADP(+)</name>
        <dbReference type="ChEBI" id="CHEBI:58349"/>
    </ligand>
</feature>
<feature type="binding site" evidence="1">
    <location>
        <position position="307"/>
    </location>
    <ligand>
        <name>NADP(+)</name>
        <dbReference type="ChEBI" id="CHEBI:58349"/>
    </ligand>
</feature>
<feature type="site" description="Critical for catalysis" evidence="1">
    <location>
        <position position="194"/>
    </location>
</feature>
<organism>
    <name type="scientific">Glarea lozoyensis (strain ATCC 20868 / MF5171)</name>
    <dbReference type="NCBI Taxonomy" id="1116229"/>
    <lineage>
        <taxon>Eukaryota</taxon>
        <taxon>Fungi</taxon>
        <taxon>Dikarya</taxon>
        <taxon>Ascomycota</taxon>
        <taxon>Pezizomycotina</taxon>
        <taxon>Leotiomycetes</taxon>
        <taxon>Helotiales</taxon>
        <taxon>Helotiaceae</taxon>
        <taxon>Glarea</taxon>
    </lineage>
</organism>